<evidence type="ECO:0000255" key="1">
    <source>
        <dbReference type="HAMAP-Rule" id="MF_01321"/>
    </source>
</evidence>
<name>RPOB_DEIGD</name>
<comment type="function">
    <text evidence="1">DNA-dependent RNA polymerase catalyzes the transcription of DNA into RNA using the four ribonucleoside triphosphates as substrates.</text>
</comment>
<comment type="catalytic activity">
    <reaction evidence="1">
        <text>RNA(n) + a ribonucleoside 5'-triphosphate = RNA(n+1) + diphosphate</text>
        <dbReference type="Rhea" id="RHEA:21248"/>
        <dbReference type="Rhea" id="RHEA-COMP:14527"/>
        <dbReference type="Rhea" id="RHEA-COMP:17342"/>
        <dbReference type="ChEBI" id="CHEBI:33019"/>
        <dbReference type="ChEBI" id="CHEBI:61557"/>
        <dbReference type="ChEBI" id="CHEBI:140395"/>
        <dbReference type="EC" id="2.7.7.6"/>
    </reaction>
</comment>
<comment type="subunit">
    <text evidence="1">The RNAP catalytic core consists of 2 alpha, 1 beta, 1 beta' and 1 omega subunit. When a sigma factor is associated with the core the holoenzyme is formed, which can initiate transcription.</text>
</comment>
<comment type="similarity">
    <text evidence="1">Belongs to the RNA polymerase beta chain family.</text>
</comment>
<proteinExistence type="inferred from homology"/>
<protein>
    <recommendedName>
        <fullName evidence="1">DNA-directed RNA polymerase subunit beta</fullName>
        <shortName evidence="1">RNAP subunit beta</shortName>
        <ecNumber evidence="1">2.7.7.6</ecNumber>
    </recommendedName>
    <alternativeName>
        <fullName evidence="1">RNA polymerase subunit beta</fullName>
    </alternativeName>
    <alternativeName>
        <fullName evidence="1">Transcriptase subunit beta</fullName>
    </alternativeName>
</protein>
<keyword id="KW-0240">DNA-directed RNA polymerase</keyword>
<keyword id="KW-0548">Nucleotidyltransferase</keyword>
<keyword id="KW-0804">Transcription</keyword>
<keyword id="KW-0808">Transferase</keyword>
<organism>
    <name type="scientific">Deinococcus geothermalis (strain DSM 11300 / CIP 105573 / AG-3a)</name>
    <dbReference type="NCBI Taxonomy" id="319795"/>
    <lineage>
        <taxon>Bacteria</taxon>
        <taxon>Thermotogati</taxon>
        <taxon>Deinococcota</taxon>
        <taxon>Deinococci</taxon>
        <taxon>Deinococcales</taxon>
        <taxon>Deinococcaceae</taxon>
        <taxon>Deinococcus</taxon>
    </lineage>
</organism>
<feature type="chain" id="PRO_0000300306" description="DNA-directed RNA polymerase subunit beta">
    <location>
        <begin position="1"/>
        <end position="1152"/>
    </location>
</feature>
<sequence length="1152" mass="127384">MSLTDQKPRIERFGEITEVIPLPNLTEVQVNSFKAFLQADKAPDERDDTGLQSAFREVFPIDETEKGRSTGLVLDFLEYRLGEPPYTPEECREKDLTYQAPLYAKLQLIHKDSGLIKEDQVFLGDLPLMTDDGSFVINGADRVVISQIHRSPGVYFTSSYKGIKKMYTAAIIPMPKRGPWIELEFNGGVLEMKVNKRKFPVSLLLRVLGYDDAQLKALFTEFDPAAELPEDKSAGMNPDEALLRLFTVLRPGDPPKRDKAIQYLYGLLADPKRYDLGEPGRFKMNTKLGTRRQDRTLLTFEDGRFGDAGLVDTIRYLMALQQGLETVTMGADEDGVAIEVPVTEDDIDHLGNRRVRTVGELLADQLRVGMGRMARGVRERMLLGNPDAATPTKLVNNRPIVAAMREFFGRSQLSQFKDQTNPLSDLRHKRRISALGPGGLTRERAGFDVRDVHRTHYGRICPIETPEGANIGLISSLSSYAKVNDLGFIEAPYRRVVDGRVTDDVVYMTADIEDRYVIAQANSPLNPDGTFAEERVLARKKGDPMLYAPTEVDFMDVSPKQIVSINTSLIPFLEHDDANRALMGSNMQSQAVPLVRADSPAVGTGVEERVVTDSGTSVISDVTGRVTYVDARAIQVTLTEDAPQIGLVKGNVRTFELVRFTRSNQGTNLDQHPIVSVGDEVVPGQVIADGPASDQGRLALGQNITIAIMPFDGFNFEDAICISEGLVRKDFYTSVHIEKDEIEARDTKLGPEKITRDIPGLSEAALRDLDEDGIVRVGAEVKPGDILVGKTSFKGESEPTPEERLLRSIFGEKAREVKDTSLRVQSGQGGIVVKTVRFRRGDEGVDLKPGVREMVRVYVAQKRQLQVGDKVANRHGNKGVVSKILPPEDMPYLEDGTPVDLVFNPLGVPSRMNLGQILETHLGEVARLTGQKFVTPVFDSATEEAIKEMLEVAAAERLQRRKDEGFELDKREQEVLDRAGKLGVISPPNGDYAAAQMQLARTGKSVLYDGRTGEPISGPVVVGTMYVMKLYHMVEDKLHARSTGPYSLITQQPLGGKAQFGGQRFGEMEVWALEAYGAAHTLQEMLTIKSDDIDGRDAAYQSIVKGEEVSGSTIPESFKVLVKELHSLGLDVEVLDNNDKPVDIFEGMMPKR</sequence>
<dbReference type="EC" id="2.7.7.6" evidence="1"/>
<dbReference type="EMBL" id="CP000359">
    <property type="protein sequence ID" value="ABF44938.1"/>
    <property type="molecule type" value="Genomic_DNA"/>
</dbReference>
<dbReference type="RefSeq" id="WP_011529779.1">
    <property type="nucleotide sequence ID" value="NC_008025.1"/>
</dbReference>
<dbReference type="SMR" id="Q1J0P6"/>
<dbReference type="STRING" id="319795.Dgeo_0636"/>
<dbReference type="KEGG" id="dge:Dgeo_0636"/>
<dbReference type="eggNOG" id="COG0085">
    <property type="taxonomic scope" value="Bacteria"/>
</dbReference>
<dbReference type="HOGENOM" id="CLU_000524_4_1_0"/>
<dbReference type="Proteomes" id="UP000002431">
    <property type="component" value="Chromosome"/>
</dbReference>
<dbReference type="GO" id="GO:0000428">
    <property type="term" value="C:DNA-directed RNA polymerase complex"/>
    <property type="evidence" value="ECO:0007669"/>
    <property type="project" value="UniProtKB-KW"/>
</dbReference>
<dbReference type="GO" id="GO:0003677">
    <property type="term" value="F:DNA binding"/>
    <property type="evidence" value="ECO:0007669"/>
    <property type="project" value="UniProtKB-UniRule"/>
</dbReference>
<dbReference type="GO" id="GO:0003899">
    <property type="term" value="F:DNA-directed RNA polymerase activity"/>
    <property type="evidence" value="ECO:0007669"/>
    <property type="project" value="UniProtKB-UniRule"/>
</dbReference>
<dbReference type="GO" id="GO:0032549">
    <property type="term" value="F:ribonucleoside binding"/>
    <property type="evidence" value="ECO:0007669"/>
    <property type="project" value="InterPro"/>
</dbReference>
<dbReference type="GO" id="GO:0006351">
    <property type="term" value="P:DNA-templated transcription"/>
    <property type="evidence" value="ECO:0007669"/>
    <property type="project" value="UniProtKB-UniRule"/>
</dbReference>
<dbReference type="CDD" id="cd00653">
    <property type="entry name" value="RNA_pol_B_RPB2"/>
    <property type="match status" value="1"/>
</dbReference>
<dbReference type="FunFam" id="3.90.1800.10:FF:000001">
    <property type="entry name" value="DNA-directed RNA polymerase subunit beta"/>
    <property type="match status" value="1"/>
</dbReference>
<dbReference type="Gene3D" id="2.40.50.100">
    <property type="match status" value="1"/>
</dbReference>
<dbReference type="Gene3D" id="2.40.50.150">
    <property type="match status" value="1"/>
</dbReference>
<dbReference type="Gene3D" id="3.90.1100.10">
    <property type="match status" value="1"/>
</dbReference>
<dbReference type="Gene3D" id="2.30.150.10">
    <property type="entry name" value="DNA-directed RNA polymerase, beta subunit, external 1 domain"/>
    <property type="match status" value="1"/>
</dbReference>
<dbReference type="Gene3D" id="2.40.270.10">
    <property type="entry name" value="DNA-directed RNA polymerase, subunit 2, domain 6"/>
    <property type="match status" value="1"/>
</dbReference>
<dbReference type="Gene3D" id="3.90.1800.10">
    <property type="entry name" value="RNA polymerase alpha subunit dimerisation domain"/>
    <property type="match status" value="1"/>
</dbReference>
<dbReference type="Gene3D" id="3.90.1110.10">
    <property type="entry name" value="RNA polymerase Rpb2, domain 2"/>
    <property type="match status" value="1"/>
</dbReference>
<dbReference type="HAMAP" id="MF_01321">
    <property type="entry name" value="RNApol_bact_RpoB"/>
    <property type="match status" value="1"/>
</dbReference>
<dbReference type="InterPro" id="IPR042107">
    <property type="entry name" value="DNA-dir_RNA_pol_bsu_ext_1_sf"/>
</dbReference>
<dbReference type="InterPro" id="IPR019462">
    <property type="entry name" value="DNA-dir_RNA_pol_bsu_external_1"/>
</dbReference>
<dbReference type="InterPro" id="IPR015712">
    <property type="entry name" value="DNA-dir_RNA_pol_su2"/>
</dbReference>
<dbReference type="InterPro" id="IPR007120">
    <property type="entry name" value="DNA-dir_RNAP_su2_dom"/>
</dbReference>
<dbReference type="InterPro" id="IPR037033">
    <property type="entry name" value="DNA-dir_RNAP_su2_hyb_sf"/>
</dbReference>
<dbReference type="InterPro" id="IPR010243">
    <property type="entry name" value="RNA_pol_bsu_bac"/>
</dbReference>
<dbReference type="InterPro" id="IPR007121">
    <property type="entry name" value="RNA_pol_bsu_CS"/>
</dbReference>
<dbReference type="InterPro" id="IPR007644">
    <property type="entry name" value="RNA_pol_bsu_protrusion"/>
</dbReference>
<dbReference type="InterPro" id="IPR007642">
    <property type="entry name" value="RNA_pol_Rpb2_2"/>
</dbReference>
<dbReference type="InterPro" id="IPR037034">
    <property type="entry name" value="RNA_pol_Rpb2_2_sf"/>
</dbReference>
<dbReference type="InterPro" id="IPR007645">
    <property type="entry name" value="RNA_pol_Rpb2_3"/>
</dbReference>
<dbReference type="InterPro" id="IPR007641">
    <property type="entry name" value="RNA_pol_Rpb2_7"/>
</dbReference>
<dbReference type="InterPro" id="IPR014724">
    <property type="entry name" value="RNA_pol_RPB2_OB-fold"/>
</dbReference>
<dbReference type="NCBIfam" id="NF001616">
    <property type="entry name" value="PRK00405.1"/>
    <property type="match status" value="1"/>
</dbReference>
<dbReference type="NCBIfam" id="TIGR02013">
    <property type="entry name" value="rpoB"/>
    <property type="match status" value="1"/>
</dbReference>
<dbReference type="PANTHER" id="PTHR20856">
    <property type="entry name" value="DNA-DIRECTED RNA POLYMERASE I SUBUNIT 2"/>
    <property type="match status" value="1"/>
</dbReference>
<dbReference type="Pfam" id="PF04563">
    <property type="entry name" value="RNA_pol_Rpb2_1"/>
    <property type="match status" value="1"/>
</dbReference>
<dbReference type="Pfam" id="PF04561">
    <property type="entry name" value="RNA_pol_Rpb2_2"/>
    <property type="match status" value="1"/>
</dbReference>
<dbReference type="Pfam" id="PF04565">
    <property type="entry name" value="RNA_pol_Rpb2_3"/>
    <property type="match status" value="1"/>
</dbReference>
<dbReference type="Pfam" id="PF10385">
    <property type="entry name" value="RNA_pol_Rpb2_45"/>
    <property type="match status" value="1"/>
</dbReference>
<dbReference type="Pfam" id="PF00562">
    <property type="entry name" value="RNA_pol_Rpb2_6"/>
    <property type="match status" value="1"/>
</dbReference>
<dbReference type="Pfam" id="PF04560">
    <property type="entry name" value="RNA_pol_Rpb2_7"/>
    <property type="match status" value="1"/>
</dbReference>
<dbReference type="SUPFAM" id="SSF64484">
    <property type="entry name" value="beta and beta-prime subunits of DNA dependent RNA-polymerase"/>
    <property type="match status" value="1"/>
</dbReference>
<dbReference type="PROSITE" id="PS01166">
    <property type="entry name" value="RNA_POL_BETA"/>
    <property type="match status" value="1"/>
</dbReference>
<gene>
    <name evidence="1" type="primary">rpoB</name>
    <name type="ordered locus">Dgeo_0636</name>
</gene>
<reference key="1">
    <citation type="submission" date="2006-04" db="EMBL/GenBank/DDBJ databases">
        <title>Complete sequence of chromosome of Deinococcus geothermalis DSM 11300.</title>
        <authorList>
            <person name="Copeland A."/>
            <person name="Lucas S."/>
            <person name="Lapidus A."/>
            <person name="Barry K."/>
            <person name="Detter J.C."/>
            <person name="Glavina del Rio T."/>
            <person name="Hammon N."/>
            <person name="Israni S."/>
            <person name="Dalin E."/>
            <person name="Tice H."/>
            <person name="Pitluck S."/>
            <person name="Brettin T."/>
            <person name="Bruce D."/>
            <person name="Han C."/>
            <person name="Tapia R."/>
            <person name="Saunders E."/>
            <person name="Gilna P."/>
            <person name="Schmutz J."/>
            <person name="Larimer F."/>
            <person name="Land M."/>
            <person name="Hauser L."/>
            <person name="Kyrpides N."/>
            <person name="Kim E."/>
            <person name="Daly M.J."/>
            <person name="Fredrickson J.K."/>
            <person name="Makarova K.S."/>
            <person name="Gaidamakova E.K."/>
            <person name="Zhai M."/>
            <person name="Richardson P."/>
        </authorList>
    </citation>
    <scope>NUCLEOTIDE SEQUENCE [LARGE SCALE GENOMIC DNA]</scope>
    <source>
        <strain>DSM 11300 / CIP 105573 / AG-3a</strain>
    </source>
</reference>
<accession>Q1J0P6</accession>